<organism>
    <name type="scientific">Escherichia coli (strain K12)</name>
    <dbReference type="NCBI Taxonomy" id="83333"/>
    <lineage>
        <taxon>Bacteria</taxon>
        <taxon>Pseudomonadati</taxon>
        <taxon>Pseudomonadota</taxon>
        <taxon>Gammaproteobacteria</taxon>
        <taxon>Enterobacterales</taxon>
        <taxon>Enterobacteriaceae</taxon>
        <taxon>Escherichia</taxon>
    </lineage>
</organism>
<feature type="chain" id="PRO_0000156897" description="UPF0056 inner membrane protein MarC">
    <location>
        <begin position="1"/>
        <end position="221"/>
    </location>
</feature>
<feature type="topological domain" description="Periplasmic" evidence="1">
    <location>
        <begin position="1"/>
        <end position="7"/>
    </location>
</feature>
<feature type="transmembrane region" description="Helical" evidence="1">
    <location>
        <begin position="8"/>
        <end position="28"/>
    </location>
</feature>
<feature type="topological domain" description="Cytoplasmic" evidence="1">
    <location>
        <begin position="29"/>
        <end position="44"/>
    </location>
</feature>
<feature type="transmembrane region" description="Helical" evidence="1">
    <location>
        <begin position="45"/>
        <end position="65"/>
    </location>
</feature>
<feature type="topological domain" description="Periplasmic" evidence="1">
    <location>
        <begin position="66"/>
        <end position="68"/>
    </location>
</feature>
<feature type="transmembrane region" description="Helical" evidence="1">
    <location>
        <begin position="69"/>
        <end position="89"/>
    </location>
</feature>
<feature type="topological domain" description="Cytoplasmic" evidence="1">
    <location>
        <begin position="90"/>
        <end position="118"/>
    </location>
</feature>
<feature type="transmembrane region" description="Helical" evidence="1">
    <location>
        <begin position="119"/>
        <end position="139"/>
    </location>
</feature>
<feature type="topological domain" description="Periplasmic" evidence="1">
    <location>
        <begin position="140"/>
        <end position="154"/>
    </location>
</feature>
<feature type="transmembrane region" description="Helical" evidence="1">
    <location>
        <begin position="155"/>
        <end position="175"/>
    </location>
</feature>
<feature type="topological domain" description="Cytoplasmic" evidence="1">
    <location>
        <begin position="176"/>
        <end position="196"/>
    </location>
</feature>
<feature type="transmembrane region" description="Helical" evidence="1">
    <location>
        <begin position="197"/>
        <end position="217"/>
    </location>
</feature>
<feature type="topological domain" description="Periplasmic" evidence="1">
    <location>
        <begin position="218"/>
        <end position="221"/>
    </location>
</feature>
<gene>
    <name type="primary">marC</name>
    <name type="synonym">ydeB</name>
    <name type="synonym">ydeC</name>
    <name type="ordered locus">b1529</name>
    <name type="ordered locus">JW1522</name>
</gene>
<sequence>MLDLFKAIGLGLVVLLPLANPLTTVALFLGLAGNMNSAERNRQSLMASVYVFAIMMVAYYAGQLVMDTFGISIPGLRIAGGLIVAFIGFRMLFPQQKAIDSPEAKSKSEELEDEPSANIAFVPLAMPSTAGPGTIAMIISSASTVRQSSTFADWVLMVAPPLIFFLVAVILWGSLRSSGAIMRLVGKGGIEAISRLMGFLLVCMGVQFIINGILEIIKTYH</sequence>
<keyword id="KW-0997">Cell inner membrane</keyword>
<keyword id="KW-1003">Cell membrane</keyword>
<keyword id="KW-0472">Membrane</keyword>
<keyword id="KW-1185">Reference proteome</keyword>
<keyword id="KW-0812">Transmembrane</keyword>
<keyword id="KW-1133">Transmembrane helix</keyword>
<reference key="1">
    <citation type="journal article" date="1993" name="J. Bacteriol.">
        <title>Genetic and functional analysis of the multiple antibiotic resistance (mar) locus in Escherichia coli.</title>
        <authorList>
            <person name="Cohen S.P."/>
            <person name="Haechler H."/>
            <person name="Levy S.B."/>
        </authorList>
    </citation>
    <scope>NUCLEOTIDE SEQUENCE [GENOMIC DNA]</scope>
</reference>
<reference key="2">
    <citation type="journal article" date="1996" name="DNA Res.">
        <title>A 570-kb DNA sequence of the Escherichia coli K-12 genome corresponding to the 28.0-40.1 min region on the linkage map.</title>
        <authorList>
            <person name="Aiba H."/>
            <person name="Baba T."/>
            <person name="Fujita K."/>
            <person name="Hayashi K."/>
            <person name="Inada T."/>
            <person name="Isono K."/>
            <person name="Itoh T."/>
            <person name="Kasai H."/>
            <person name="Kashimoto K."/>
            <person name="Kimura S."/>
            <person name="Kitakawa M."/>
            <person name="Kitagawa M."/>
            <person name="Makino K."/>
            <person name="Miki T."/>
            <person name="Mizobuchi K."/>
            <person name="Mori H."/>
            <person name="Mori T."/>
            <person name="Motomura K."/>
            <person name="Nakade S."/>
            <person name="Nakamura Y."/>
            <person name="Nashimoto H."/>
            <person name="Nishio Y."/>
            <person name="Oshima T."/>
            <person name="Saito N."/>
            <person name="Sampei G."/>
            <person name="Seki Y."/>
            <person name="Sivasundaram S."/>
            <person name="Tagami H."/>
            <person name="Takeda J."/>
            <person name="Takemoto K."/>
            <person name="Takeuchi Y."/>
            <person name="Wada C."/>
            <person name="Yamamoto Y."/>
            <person name="Horiuchi T."/>
        </authorList>
    </citation>
    <scope>NUCLEOTIDE SEQUENCE [LARGE SCALE GENOMIC DNA]</scope>
    <source>
        <strain>K12 / W3110 / ATCC 27325 / DSM 5911</strain>
    </source>
</reference>
<reference key="3">
    <citation type="journal article" date="1997" name="Science">
        <title>The complete genome sequence of Escherichia coli K-12.</title>
        <authorList>
            <person name="Blattner F.R."/>
            <person name="Plunkett G. III"/>
            <person name="Bloch C.A."/>
            <person name="Perna N.T."/>
            <person name="Burland V."/>
            <person name="Riley M."/>
            <person name="Collado-Vides J."/>
            <person name="Glasner J.D."/>
            <person name="Rode C.K."/>
            <person name="Mayhew G.F."/>
            <person name="Gregor J."/>
            <person name="Davis N.W."/>
            <person name="Kirkpatrick H.A."/>
            <person name="Goeden M.A."/>
            <person name="Rose D.J."/>
            <person name="Mau B."/>
            <person name="Shao Y."/>
        </authorList>
    </citation>
    <scope>NUCLEOTIDE SEQUENCE [LARGE SCALE GENOMIC DNA]</scope>
    <source>
        <strain>K12 / MG1655 / ATCC 47076</strain>
    </source>
</reference>
<reference key="4">
    <citation type="journal article" date="2006" name="Mol. Syst. Biol.">
        <title>Highly accurate genome sequences of Escherichia coli K-12 strains MG1655 and W3110.</title>
        <authorList>
            <person name="Hayashi K."/>
            <person name="Morooka N."/>
            <person name="Yamamoto Y."/>
            <person name="Fujita K."/>
            <person name="Isono K."/>
            <person name="Choi S."/>
            <person name="Ohtsubo E."/>
            <person name="Baba T."/>
            <person name="Wanner B.L."/>
            <person name="Mori H."/>
            <person name="Horiuchi T."/>
        </authorList>
    </citation>
    <scope>NUCLEOTIDE SEQUENCE [LARGE SCALE GENOMIC DNA]</scope>
    <source>
        <strain>K12 / W3110 / ATCC 27325 / DSM 5911</strain>
    </source>
</reference>
<reference key="5">
    <citation type="submission" date="1998-05" db="EMBL/GenBank/DDBJ databases">
        <authorList>
            <person name="Haechler H."/>
        </authorList>
    </citation>
    <scope>GENE NAME</scope>
</reference>
<reference key="6">
    <citation type="journal article" date="2002" name="Proc. Natl. Acad. Sci. U.S.A.">
        <title>Rapid topology mapping of Escherichia coli inner-membrane proteins by prediction and PhoA/GFP fusion analysis.</title>
        <authorList>
            <person name="Drew D."/>
            <person name="Sjoestrand D."/>
            <person name="Nilsson J."/>
            <person name="Urbig T."/>
            <person name="Chin C.-N."/>
            <person name="de Gier J.-W."/>
            <person name="von Heijne G."/>
        </authorList>
    </citation>
    <scope>TOPOLOGY</scope>
    <source>
        <strain>K12 / JM109 / ATCC 53323</strain>
    </source>
</reference>
<reference key="7">
    <citation type="journal article" date="2005" name="Science">
        <title>Global topology analysis of the Escherichia coli inner membrane proteome.</title>
        <authorList>
            <person name="Daley D.O."/>
            <person name="Rapp M."/>
            <person name="Granseth E."/>
            <person name="Melen K."/>
            <person name="Drew D."/>
            <person name="von Heijne G."/>
        </authorList>
    </citation>
    <scope>TOPOLOGY [LARGE SCALE ANALYSIS]</scope>
    <source>
        <strain>K12 / MG1655 / ATCC 47076</strain>
    </source>
</reference>
<reference key="8">
    <citation type="journal article" date="2008" name="Antimicrob. Agents Chemother.">
        <title>The marC gene of Escherichia coli is not involved in multiple antibiotic resistance.</title>
        <authorList>
            <person name="McDermott P.F."/>
            <person name="McMurry L.M."/>
            <person name="Podglajen I."/>
            <person name="Dzink-Fox J.L."/>
            <person name="Schneiders T."/>
            <person name="Draper M.P."/>
            <person name="Levy S.B."/>
        </authorList>
    </citation>
    <scope>LACK OF INVOLVEMENT IN ANTIBIOTIC RESISTANCE</scope>
</reference>
<evidence type="ECO:0000255" key="1"/>
<evidence type="ECO:0000305" key="2"/>
<evidence type="ECO:0000305" key="3">
    <source>
    </source>
</evidence>
<name>MARC_ECOLI</name>
<comment type="subcellular location">
    <subcellularLocation>
        <location>Cell inner membrane</location>
        <topology>Multi-pass membrane protein</topology>
    </subcellularLocation>
</comment>
<comment type="similarity">
    <text evidence="2">Belongs to the UPF0056 (MarC) family.</text>
</comment>
<comment type="caution">
    <text evidence="3">Was originally thought to be involved in multiple antibiotic resistance.</text>
</comment>
<proteinExistence type="evidence at protein level"/>
<accession>P0AEY1</accession>
<accession>P31123</accession>
<accession>P31124</accession>
<accession>P77753</accession>
<protein>
    <recommendedName>
        <fullName>UPF0056 inner membrane protein MarC</fullName>
    </recommendedName>
</protein>
<dbReference type="EMBL" id="M96235">
    <property type="protein sequence ID" value="AAC16396.1"/>
    <property type="molecule type" value="Genomic_DNA"/>
</dbReference>
<dbReference type="EMBL" id="U00096">
    <property type="protein sequence ID" value="AAC74602.1"/>
    <property type="molecule type" value="Genomic_DNA"/>
</dbReference>
<dbReference type="EMBL" id="AP009048">
    <property type="protein sequence ID" value="BAA15211.2"/>
    <property type="molecule type" value="Genomic_DNA"/>
</dbReference>
<dbReference type="PIR" id="D64907">
    <property type="entry name" value="D64907"/>
</dbReference>
<dbReference type="RefSeq" id="NP_416046.1">
    <property type="nucleotide sequence ID" value="NC_000913.3"/>
</dbReference>
<dbReference type="RefSeq" id="WP_000885033.1">
    <property type="nucleotide sequence ID" value="NZ_STEB01000003.1"/>
</dbReference>
<dbReference type="BioGRID" id="4259109">
    <property type="interactions" value="12"/>
</dbReference>
<dbReference type="FunCoup" id="P0AEY1">
    <property type="interactions" value="132"/>
</dbReference>
<dbReference type="STRING" id="511145.b1529"/>
<dbReference type="TCDB" id="2.A.95.1.1">
    <property type="family name" value="the 6 tms neutral amino acid transporter (naat) family"/>
</dbReference>
<dbReference type="PaxDb" id="511145-b1529"/>
<dbReference type="EnsemblBacteria" id="AAC74602">
    <property type="protein sequence ID" value="AAC74602"/>
    <property type="gene ID" value="b1529"/>
</dbReference>
<dbReference type="GeneID" id="93775693"/>
<dbReference type="GeneID" id="947132"/>
<dbReference type="KEGG" id="ecj:JW1522"/>
<dbReference type="KEGG" id="eco:b1529"/>
<dbReference type="KEGG" id="ecoc:C3026_08835"/>
<dbReference type="PATRIC" id="fig|1411691.4.peg.737"/>
<dbReference type="EchoBASE" id="EB1593"/>
<dbReference type="eggNOG" id="COG2095">
    <property type="taxonomic scope" value="Bacteria"/>
</dbReference>
<dbReference type="HOGENOM" id="CLU_079909_2_0_6"/>
<dbReference type="InParanoid" id="P0AEY1"/>
<dbReference type="OMA" id="MLIMIDP"/>
<dbReference type="OrthoDB" id="21094at2"/>
<dbReference type="PhylomeDB" id="P0AEY1"/>
<dbReference type="BioCyc" id="EcoCyc:EG11637-MONOMER"/>
<dbReference type="PRO" id="PR:P0AEY1"/>
<dbReference type="Proteomes" id="UP000000625">
    <property type="component" value="Chromosome"/>
</dbReference>
<dbReference type="GO" id="GO:0005886">
    <property type="term" value="C:plasma membrane"/>
    <property type="evidence" value="ECO:0000318"/>
    <property type="project" value="GO_Central"/>
</dbReference>
<dbReference type="InterPro" id="IPR002771">
    <property type="entry name" value="Multi_antbiot-R_MarC"/>
</dbReference>
<dbReference type="NCBIfam" id="TIGR00427">
    <property type="entry name" value="NAAT family transporter"/>
    <property type="match status" value="1"/>
</dbReference>
<dbReference type="NCBIfam" id="NF008228">
    <property type="entry name" value="PRK10995.1"/>
    <property type="match status" value="1"/>
</dbReference>
<dbReference type="PANTHER" id="PTHR33508:SF2">
    <property type="entry name" value="UPF0056 INNER MEMBRANE PROTEIN MARC"/>
    <property type="match status" value="1"/>
</dbReference>
<dbReference type="PANTHER" id="PTHR33508">
    <property type="entry name" value="UPF0056 MEMBRANE PROTEIN YHCE"/>
    <property type="match status" value="1"/>
</dbReference>
<dbReference type="Pfam" id="PF01914">
    <property type="entry name" value="MarC"/>
    <property type="match status" value="1"/>
</dbReference>